<name>Y2534_CLOBA</name>
<accession>B2UWS9</accession>
<sequence length="502" mass="56422">MKIGFDHEKYLEEQSKYILERVDSYDKLYLEFGGKLFNDRHAMRVLPGFDENAKIKLLHKLKEKVEVVICVYAGDIERNKIRGDFGITYDMDVLRLIDDLRTYELEVNSVVITRYNGQPATTVFINKLERRGIKVYKHKSTKGYPTDVDTIVSEEGYGQNPYIETTKPIVVVTAPGPGSGKLATCLSQLYHESKRGNAAGYSKFETFPVWNVPLKHPLNIAYEAATVDLKDVNMLDSFHMDAYNKVTVNYNRDIESFPVLKRIIEKITGKESIYKSPTDMGVNRVGFGIVDDDAVKEASKQEIIRRYFKTGCDYKKGYADKETFDRSKLIMEEVDLKETDRKVVLPAREKSAKLKMATDENEICPVVALELSDGTILTGKSSDLMDGAAAVIINAIKYLANISDDIYLISPVILEPIMNLKSKTFNEKNISLNCEEVLTALSISAATNPTAQVAMEKLPLLRGCQAHATTILSRADDTTLGKLGVDVTCDPNYPSESLYYNN</sequence>
<proteinExistence type="inferred from homology"/>
<feature type="chain" id="PRO_1000199739" description="UPF0371 protein CLH_2534">
    <location>
        <begin position="1"/>
        <end position="502"/>
    </location>
</feature>
<organism>
    <name type="scientific">Clostridium botulinum (strain Alaska E43 / Type E3)</name>
    <dbReference type="NCBI Taxonomy" id="508767"/>
    <lineage>
        <taxon>Bacteria</taxon>
        <taxon>Bacillati</taxon>
        <taxon>Bacillota</taxon>
        <taxon>Clostridia</taxon>
        <taxon>Eubacteriales</taxon>
        <taxon>Clostridiaceae</taxon>
        <taxon>Clostridium</taxon>
    </lineage>
</organism>
<reference key="1">
    <citation type="submission" date="2008-05" db="EMBL/GenBank/DDBJ databases">
        <title>Complete genome sequence of Clostridium botulinum E3 str. Alaska E43.</title>
        <authorList>
            <person name="Brinkac L.M."/>
            <person name="Brown J.L."/>
            <person name="Bruce D."/>
            <person name="Detter C."/>
            <person name="Munk C."/>
            <person name="Smith L.A."/>
            <person name="Smith T.J."/>
            <person name="Sutton G."/>
            <person name="Brettin T.S."/>
        </authorList>
    </citation>
    <scope>NUCLEOTIDE SEQUENCE [LARGE SCALE GENOMIC DNA]</scope>
    <source>
        <strain>Alaska E43 / Type E3</strain>
    </source>
</reference>
<comment type="similarity">
    <text evidence="1">Belongs to the UPF0371 family.</text>
</comment>
<dbReference type="EMBL" id="CP001078">
    <property type="protein sequence ID" value="ACD53754.1"/>
    <property type="molecule type" value="Genomic_DNA"/>
</dbReference>
<dbReference type="RefSeq" id="WP_003374392.1">
    <property type="nucleotide sequence ID" value="NC_010723.1"/>
</dbReference>
<dbReference type="SMR" id="B2UWS9"/>
<dbReference type="KEGG" id="cbt:CLH_2534"/>
<dbReference type="HOGENOM" id="CLU_046981_0_0_9"/>
<dbReference type="Gene3D" id="1.20.1570.10">
    <property type="entry name" value="dip2346 domain like"/>
    <property type="match status" value="1"/>
</dbReference>
<dbReference type="Gene3D" id="3.10.630.10">
    <property type="entry name" value="dip2346 domain like"/>
    <property type="match status" value="1"/>
</dbReference>
<dbReference type="Gene3D" id="3.40.140.40">
    <property type="entry name" value="Domain of unknown function (DUF1846), C-terminal subdomain"/>
    <property type="match status" value="1"/>
</dbReference>
<dbReference type="HAMAP" id="MF_01567">
    <property type="entry name" value="UPF0371"/>
    <property type="match status" value="1"/>
</dbReference>
<dbReference type="InterPro" id="IPR014999">
    <property type="entry name" value="DUF1846"/>
</dbReference>
<dbReference type="InterPro" id="IPR048441">
    <property type="entry name" value="DUF1846_C"/>
</dbReference>
<dbReference type="InterPro" id="IPR048496">
    <property type="entry name" value="DUF1846_N"/>
</dbReference>
<dbReference type="NCBIfam" id="NF010184">
    <property type="entry name" value="PRK13663.1"/>
    <property type="match status" value="1"/>
</dbReference>
<dbReference type="Pfam" id="PF08903">
    <property type="entry name" value="DUF1846"/>
    <property type="match status" value="1"/>
</dbReference>
<dbReference type="Pfam" id="PF20921">
    <property type="entry name" value="DUF1846_C"/>
    <property type="match status" value="1"/>
</dbReference>
<dbReference type="PIRSF" id="PIRSF033132">
    <property type="entry name" value="DUF1846"/>
    <property type="match status" value="1"/>
</dbReference>
<protein>
    <recommendedName>
        <fullName evidence="1">UPF0371 protein CLH_2534</fullName>
    </recommendedName>
</protein>
<gene>
    <name type="ordered locus">CLH_2534</name>
</gene>
<evidence type="ECO:0000255" key="1">
    <source>
        <dbReference type="HAMAP-Rule" id="MF_01567"/>
    </source>
</evidence>